<organism>
    <name type="scientific">Mycobacterium tuberculosis (strain CDC 1551 / Oshkosh)</name>
    <dbReference type="NCBI Taxonomy" id="83331"/>
    <lineage>
        <taxon>Bacteria</taxon>
        <taxon>Bacillati</taxon>
        <taxon>Actinomycetota</taxon>
        <taxon>Actinomycetes</taxon>
        <taxon>Mycobacteriales</taxon>
        <taxon>Mycobacteriaceae</taxon>
        <taxon>Mycobacterium</taxon>
        <taxon>Mycobacterium tuberculosis complex</taxon>
    </lineage>
</organism>
<sequence>MSEMTARFSEIVGNANLLTGDAIPEDYAHDEELTGPPQKPAYAAKPATPEEVAQLLKAASENGVPVTARGSGCGLSGAARPVEGGLLISFDRMNKVLEVDTANQVAVVQPGVALTDLDAATADTGLRYTVYPGELSSSVGGNVGTNAGGMRAVKYGVARHNVLGLQAVLPTGEIIRTGGRMAKVSTGYDLTQLIIGSEGTLALVTEVIVKLHPRLDHNASVLAPFADFDQVMAAVPKILASGLAPDILEYIDNTSMAALISTQNLELGIPDQIRDSCEAYLLVALENRIADRLFEDIQTVGEMLMELGAVDAYVLEGGSARKLIEAREKAFWAAKALGADDIIDTVVPRASMPKFLSTARGLAAAADGAAVGCGHAGDGNVHMAIACKDPEKKKKLMTDIFALAMELGGAISGEHGVGRAKTGYFLELEDPVKISLMRRIKQSFDPAGILNPGVVFGDT</sequence>
<evidence type="ECO:0000250" key="1"/>
<evidence type="ECO:0000255" key="2">
    <source>
        <dbReference type="PROSITE-ProRule" id="PRU00718"/>
    </source>
</evidence>
<evidence type="ECO:0000256" key="3">
    <source>
        <dbReference type="SAM" id="MobiDB-lite"/>
    </source>
</evidence>
<evidence type="ECO:0000305" key="4"/>
<feature type="chain" id="PRO_0000427951" description="Uncharacterized FAD-linked oxidoreductase MT2338">
    <location>
        <begin position="1"/>
        <end position="459"/>
    </location>
</feature>
<feature type="domain" description="FAD-binding PCMH-type" evidence="2">
    <location>
        <begin position="35"/>
        <end position="214"/>
    </location>
</feature>
<feature type="region of interest" description="Disordered" evidence="3">
    <location>
        <begin position="28"/>
        <end position="47"/>
    </location>
</feature>
<accession>P9WIT0</accession>
<accession>L0TBU2</accession>
<accession>Q50685</accession>
<accession>Q7D7C5</accession>
<reference key="1">
    <citation type="journal article" date="2002" name="J. Bacteriol.">
        <title>Whole-genome comparison of Mycobacterium tuberculosis clinical and laboratory strains.</title>
        <authorList>
            <person name="Fleischmann R.D."/>
            <person name="Alland D."/>
            <person name="Eisen J.A."/>
            <person name="Carpenter L."/>
            <person name="White O."/>
            <person name="Peterson J.D."/>
            <person name="DeBoy R.T."/>
            <person name="Dodson R.J."/>
            <person name="Gwinn M.L."/>
            <person name="Haft D.H."/>
            <person name="Hickey E.K."/>
            <person name="Kolonay J.F."/>
            <person name="Nelson W.C."/>
            <person name="Umayam L.A."/>
            <person name="Ermolaeva M.D."/>
            <person name="Salzberg S.L."/>
            <person name="Delcher A."/>
            <person name="Utterback T.R."/>
            <person name="Weidman J.F."/>
            <person name="Khouri H.M."/>
            <person name="Gill J."/>
            <person name="Mikula A."/>
            <person name="Bishai W."/>
            <person name="Jacobs W.R. Jr."/>
            <person name="Venter J.C."/>
            <person name="Fraser C.M."/>
        </authorList>
    </citation>
    <scope>NUCLEOTIDE SEQUENCE [LARGE SCALE GENOMIC DNA]</scope>
    <source>
        <strain>CDC 1551 / Oshkosh</strain>
    </source>
</reference>
<name>Y2280_MYCTO</name>
<keyword id="KW-0274">FAD</keyword>
<keyword id="KW-0285">Flavoprotein</keyword>
<keyword id="KW-0560">Oxidoreductase</keyword>
<keyword id="KW-1185">Reference proteome</keyword>
<comment type="cofactor">
    <cofactor evidence="1">
        <name>FAD</name>
        <dbReference type="ChEBI" id="CHEBI:57692"/>
    </cofactor>
</comment>
<comment type="similarity">
    <text evidence="4">Belongs to the oxygen-dependent FAD-linked oxidoreductase family.</text>
</comment>
<dbReference type="EC" id="1.-.-.-"/>
<dbReference type="EMBL" id="AE000516">
    <property type="protein sequence ID" value="AAK46622.1"/>
    <property type="molecule type" value="Genomic_DNA"/>
</dbReference>
<dbReference type="PIR" id="D70731">
    <property type="entry name" value="D70731"/>
</dbReference>
<dbReference type="RefSeq" id="WP_003411690.1">
    <property type="nucleotide sequence ID" value="NZ_KK341227.1"/>
</dbReference>
<dbReference type="SMR" id="P9WIT0"/>
<dbReference type="KEGG" id="mtc:MT2338"/>
<dbReference type="PATRIC" id="fig|83331.31.peg.2515"/>
<dbReference type="HOGENOM" id="CLU_017779_9_2_11"/>
<dbReference type="Proteomes" id="UP000001020">
    <property type="component" value="Chromosome"/>
</dbReference>
<dbReference type="GO" id="GO:0071949">
    <property type="term" value="F:FAD binding"/>
    <property type="evidence" value="ECO:0007669"/>
    <property type="project" value="InterPro"/>
</dbReference>
<dbReference type="GO" id="GO:0016491">
    <property type="term" value="F:oxidoreductase activity"/>
    <property type="evidence" value="ECO:0007669"/>
    <property type="project" value="UniProtKB-KW"/>
</dbReference>
<dbReference type="FunFam" id="1.10.45.10:FF:000001">
    <property type="entry name" value="D-lactate dehydrogenase mitochondrial"/>
    <property type="match status" value="1"/>
</dbReference>
<dbReference type="FunFam" id="3.30.70.2740:FF:000008">
    <property type="entry name" value="Probable dehydrogenase"/>
    <property type="match status" value="1"/>
</dbReference>
<dbReference type="Gene3D" id="3.30.465.10">
    <property type="match status" value="1"/>
</dbReference>
<dbReference type="Gene3D" id="3.30.70.2740">
    <property type="match status" value="1"/>
</dbReference>
<dbReference type="Gene3D" id="1.10.45.10">
    <property type="entry name" value="Vanillyl-alcohol Oxidase, Chain A, domain 4"/>
    <property type="match status" value="1"/>
</dbReference>
<dbReference type="InterPro" id="IPR004113">
    <property type="entry name" value="FAD-bd_oxidored_4_C"/>
</dbReference>
<dbReference type="InterPro" id="IPR016166">
    <property type="entry name" value="FAD-bd_PCMH"/>
</dbReference>
<dbReference type="InterPro" id="IPR036318">
    <property type="entry name" value="FAD-bd_PCMH-like_sf"/>
</dbReference>
<dbReference type="InterPro" id="IPR016169">
    <property type="entry name" value="FAD-bd_PCMH_sub2"/>
</dbReference>
<dbReference type="InterPro" id="IPR016164">
    <property type="entry name" value="FAD-linked_Oxase-like_C"/>
</dbReference>
<dbReference type="InterPro" id="IPR051914">
    <property type="entry name" value="FAD-linked_OxidoTrans_Type4"/>
</dbReference>
<dbReference type="InterPro" id="IPR006094">
    <property type="entry name" value="Oxid_FAD_bind_N"/>
</dbReference>
<dbReference type="InterPro" id="IPR016171">
    <property type="entry name" value="Vanillyl_alc_oxidase_C-sub2"/>
</dbReference>
<dbReference type="PANTHER" id="PTHR42934">
    <property type="entry name" value="GLYCOLATE OXIDASE SUBUNIT GLCD"/>
    <property type="match status" value="1"/>
</dbReference>
<dbReference type="PANTHER" id="PTHR42934:SF2">
    <property type="entry name" value="GLYCOLATE OXIDASE SUBUNIT GLCD"/>
    <property type="match status" value="1"/>
</dbReference>
<dbReference type="Pfam" id="PF02913">
    <property type="entry name" value="FAD-oxidase_C"/>
    <property type="match status" value="1"/>
</dbReference>
<dbReference type="Pfam" id="PF01565">
    <property type="entry name" value="FAD_binding_4"/>
    <property type="match status" value="1"/>
</dbReference>
<dbReference type="SUPFAM" id="SSF56176">
    <property type="entry name" value="FAD-binding/transporter-associated domain-like"/>
    <property type="match status" value="1"/>
</dbReference>
<dbReference type="SUPFAM" id="SSF55103">
    <property type="entry name" value="FAD-linked oxidases, C-terminal domain"/>
    <property type="match status" value="1"/>
</dbReference>
<dbReference type="PROSITE" id="PS51387">
    <property type="entry name" value="FAD_PCMH"/>
    <property type="match status" value="1"/>
</dbReference>
<proteinExistence type="inferred from homology"/>
<gene>
    <name type="ordered locus">MT2338</name>
</gene>
<protein>
    <recommendedName>
        <fullName>Uncharacterized FAD-linked oxidoreductase MT2338</fullName>
        <ecNumber>1.-.-.-</ecNumber>
    </recommendedName>
</protein>